<name>CBG_SHEEP</name>
<accession>P49920</accession>
<feature type="signal peptide" evidence="1">
    <location>
        <begin position="1"/>
        <end position="22"/>
    </location>
</feature>
<feature type="chain" id="PRO_0000032434" description="Corticosteroid-binding globulin">
    <location>
        <begin position="23"/>
        <end position="430"/>
    </location>
</feature>
<feature type="binding site" evidence="1">
    <location>
        <position position="253"/>
    </location>
    <ligand>
        <name>cortisol</name>
        <dbReference type="ChEBI" id="CHEBI:17650"/>
    </ligand>
</feature>
<feature type="binding site" evidence="1">
    <location>
        <position position="285"/>
    </location>
    <ligand>
        <name>cortisol</name>
        <dbReference type="ChEBI" id="CHEBI:17650"/>
    </ligand>
</feature>
<feature type="binding site" evidence="1">
    <location>
        <position position="392"/>
    </location>
    <ligand>
        <name>cortisol</name>
        <dbReference type="ChEBI" id="CHEBI:17650"/>
    </ligand>
</feature>
<feature type="site" description="Conserved cysteine within steroid binding domain">
    <location>
        <position position="249"/>
    </location>
</feature>
<feature type="glycosylation site" description="N-linked (GlcNAc...) asparagine" evidence="2">
    <location>
        <position position="119"/>
    </location>
</feature>
<feature type="glycosylation site" description="N-linked (GlcNAc...) asparagine" evidence="2">
    <location>
        <position position="175"/>
    </location>
</feature>
<feature type="glycosylation site" description="N-linked (GlcNAc...) asparagine" evidence="2">
    <location>
        <position position="243"/>
    </location>
</feature>
<feature type="glycosylation site" description="N-linked (GlcNAc...) asparagine" evidence="2">
    <location>
        <position position="259"/>
    </location>
</feature>
<feature type="glycosylation site" description="N-linked (GlcNAc...) asparagine" evidence="2">
    <location>
        <position position="326"/>
    </location>
</feature>
<evidence type="ECO:0000250" key="1"/>
<evidence type="ECO:0000255" key="2"/>
<evidence type="ECO:0000305" key="3"/>
<proteinExistence type="evidence at transcript level"/>
<sequence length="430" mass="48056">MLLTLYTCLLWLSTSGLWTIQAKGTDTDVSTRNPHRDLAPNNVDFAFTLYKHLVASAPGKNVFISPVSISMALAMLSLGARGYTREQLLQGLGFSLVEMSEAEIHQAFRHLHHLLRESNTTLEMTMGNALFLDHSLELLESFSADTKHYYELEALTTDFQDWAGASRQINEYIKNKTQGKIVDLFSESDSSAMFILVNYIFFKGMWVHSFDLESTREENFYVNEATTVWVPMMFQSNTIKYLNDSVLPCQLVQLDYTGNETVFFVLPVKGKMDSVITALSRDTIQRWSKSLTMSQVDLYIPKISISGAYDLGGIMGDMGIADLLSNRTHFSGITQEALPKVSKVVHKAALQVDEKGLEAAAPTRVSVTAAPGPLTLRFNRPFIIMIFDDFTWSSLFLGKVVNPTEGALPGAKLRLTRAPRAHRKGWEGSP</sequence>
<comment type="function">
    <text>Major transport protein for glucocorticoids and progestins in the blood of almost all vertebrate species.</text>
</comment>
<comment type="subcellular location">
    <subcellularLocation>
        <location>Secreted</location>
    </subcellularLocation>
</comment>
<comment type="tissue specificity">
    <text>Expressed by the liver; secreted in plasma.</text>
</comment>
<comment type="domain">
    <text evidence="1">Proteolytic cleavage leads to an important conformation change. This reduces the affinity for steroids (By similarity).</text>
</comment>
<comment type="similarity">
    <text evidence="3">Belongs to the serpin family.</text>
</comment>
<keyword id="KW-0325">Glycoprotein</keyword>
<keyword id="KW-0446">Lipid-binding</keyword>
<keyword id="KW-1185">Reference proteome</keyword>
<keyword id="KW-0964">Secreted</keyword>
<keyword id="KW-0732">Signal</keyword>
<keyword id="KW-0754">Steroid-binding</keyword>
<keyword id="KW-0813">Transport</keyword>
<dbReference type="EMBL" id="X73615">
    <property type="protein sequence ID" value="CAA52000.1"/>
    <property type="molecule type" value="mRNA"/>
</dbReference>
<dbReference type="SMR" id="P49920"/>
<dbReference type="STRING" id="9940.ENSOARP00000015907"/>
<dbReference type="MEROPS" id="I04.954"/>
<dbReference type="GlyCosmos" id="P49920">
    <property type="glycosylation" value="5 sites, No reported glycans"/>
</dbReference>
<dbReference type="PaxDb" id="9940-ENSOARP00000015907"/>
<dbReference type="eggNOG" id="KOG2392">
    <property type="taxonomic scope" value="Eukaryota"/>
</dbReference>
<dbReference type="OrthoDB" id="671595at2759"/>
<dbReference type="Proteomes" id="UP000002356">
    <property type="component" value="Unplaced"/>
</dbReference>
<dbReference type="GO" id="GO:0005615">
    <property type="term" value="C:extracellular space"/>
    <property type="evidence" value="ECO:0007669"/>
    <property type="project" value="InterPro"/>
</dbReference>
<dbReference type="GO" id="GO:0004867">
    <property type="term" value="F:serine-type endopeptidase inhibitor activity"/>
    <property type="evidence" value="ECO:0007669"/>
    <property type="project" value="InterPro"/>
</dbReference>
<dbReference type="GO" id="GO:0005496">
    <property type="term" value="F:steroid binding"/>
    <property type="evidence" value="ECO:0000250"/>
    <property type="project" value="UniProtKB"/>
</dbReference>
<dbReference type="CDD" id="cd19554">
    <property type="entry name" value="serpinA6_CBG"/>
    <property type="match status" value="1"/>
</dbReference>
<dbReference type="FunFam" id="3.30.497.10:FF:000001">
    <property type="entry name" value="Serine protease inhibitor"/>
    <property type="match status" value="1"/>
</dbReference>
<dbReference type="FunFam" id="2.10.310.10:FF:000001">
    <property type="entry name" value="Serpin family A member 1"/>
    <property type="match status" value="1"/>
</dbReference>
<dbReference type="FunFam" id="2.30.39.10:FF:000002">
    <property type="entry name" value="Serpin family D member 1"/>
    <property type="match status" value="1"/>
</dbReference>
<dbReference type="Gene3D" id="2.30.39.10">
    <property type="entry name" value="Alpha-1-antitrypsin, domain 1"/>
    <property type="match status" value="1"/>
</dbReference>
<dbReference type="Gene3D" id="3.30.497.10">
    <property type="entry name" value="Antithrombin, subunit I, domain 2"/>
    <property type="match status" value="1"/>
</dbReference>
<dbReference type="InterPro" id="IPR023795">
    <property type="entry name" value="Serpin_CS"/>
</dbReference>
<dbReference type="InterPro" id="IPR023796">
    <property type="entry name" value="Serpin_dom"/>
</dbReference>
<dbReference type="InterPro" id="IPR000215">
    <property type="entry name" value="Serpin_fam"/>
</dbReference>
<dbReference type="InterPro" id="IPR036186">
    <property type="entry name" value="Serpin_sf"/>
</dbReference>
<dbReference type="InterPro" id="IPR042178">
    <property type="entry name" value="Serpin_sf_1"/>
</dbReference>
<dbReference type="InterPro" id="IPR042185">
    <property type="entry name" value="Serpin_sf_2"/>
</dbReference>
<dbReference type="PANTHER" id="PTHR11461:SF34">
    <property type="entry name" value="CORTICOSTEROID-BINDING GLOBULIN"/>
    <property type="match status" value="1"/>
</dbReference>
<dbReference type="PANTHER" id="PTHR11461">
    <property type="entry name" value="SERINE PROTEASE INHIBITOR, SERPIN"/>
    <property type="match status" value="1"/>
</dbReference>
<dbReference type="Pfam" id="PF00079">
    <property type="entry name" value="Serpin"/>
    <property type="match status" value="1"/>
</dbReference>
<dbReference type="SMART" id="SM00093">
    <property type="entry name" value="SERPIN"/>
    <property type="match status" value="1"/>
</dbReference>
<dbReference type="SUPFAM" id="SSF56574">
    <property type="entry name" value="Serpins"/>
    <property type="match status" value="1"/>
</dbReference>
<dbReference type="PROSITE" id="PS00284">
    <property type="entry name" value="SERPIN"/>
    <property type="match status" value="1"/>
</dbReference>
<organism>
    <name type="scientific">Ovis aries</name>
    <name type="common">Sheep</name>
    <dbReference type="NCBI Taxonomy" id="9940"/>
    <lineage>
        <taxon>Eukaryota</taxon>
        <taxon>Metazoa</taxon>
        <taxon>Chordata</taxon>
        <taxon>Craniata</taxon>
        <taxon>Vertebrata</taxon>
        <taxon>Euteleostomi</taxon>
        <taxon>Mammalia</taxon>
        <taxon>Eutheria</taxon>
        <taxon>Laurasiatheria</taxon>
        <taxon>Artiodactyla</taxon>
        <taxon>Ruminantia</taxon>
        <taxon>Pecora</taxon>
        <taxon>Bovidae</taxon>
        <taxon>Caprinae</taxon>
        <taxon>Ovis</taxon>
    </lineage>
</organism>
<gene>
    <name type="primary">SERPINA6</name>
    <name type="synonym">CBG</name>
</gene>
<protein>
    <recommendedName>
        <fullName>Corticosteroid-binding globulin</fullName>
        <shortName>CBG</shortName>
    </recommendedName>
    <alternativeName>
        <fullName>Serpin A6</fullName>
    </alternativeName>
    <alternativeName>
        <fullName>Transcortin</fullName>
    </alternativeName>
</protein>
<reference key="1">
    <citation type="journal article" date="1993" name="Endocrinology">
        <title>Glucocorticoid-induced increase in plasma corticosteroid-binding globulin levels in fetal sheep is associated with increased biosynthesis and alterations in glycosylation.</title>
        <authorList>
            <person name="Berdusco E.T."/>
            <person name="Hammond G.L."/>
            <person name="Jacobs R.A."/>
            <person name="Grolla A."/>
            <person name="Akagi K."/>
            <person name="Langlois D."/>
            <person name="Challis J.R."/>
        </authorList>
    </citation>
    <scope>NUCLEOTIDE SEQUENCE [MRNA]</scope>
</reference>